<reference key="1">
    <citation type="journal article" date="2009" name="Proc. Natl. Acad. Sci. U.S.A.">
        <title>The genomic basis of trophic strategy in marine bacteria.</title>
        <authorList>
            <person name="Lauro F.M."/>
            <person name="McDougald D."/>
            <person name="Thomas T."/>
            <person name="Williams T.J."/>
            <person name="Egan S."/>
            <person name="Rice S."/>
            <person name="DeMaere M.Z."/>
            <person name="Ting L."/>
            <person name="Ertan H."/>
            <person name="Johnson J."/>
            <person name="Ferriera S."/>
            <person name="Lapidus A."/>
            <person name="Anderson I."/>
            <person name="Kyrpides N."/>
            <person name="Munk A.C."/>
            <person name="Detter C."/>
            <person name="Han C.S."/>
            <person name="Brown M.V."/>
            <person name="Robb F.T."/>
            <person name="Kjelleberg S."/>
            <person name="Cavicchioli R."/>
        </authorList>
    </citation>
    <scope>NUCLEOTIDE SEQUENCE [LARGE SCALE GENOMIC DNA]</scope>
    <source>
        <strain>DSM 13593 / LMG 18877 / RB2256</strain>
    </source>
</reference>
<comment type="function">
    <text evidence="1">Catalyzes the condensation of pantoate with beta-alanine in an ATP-dependent reaction via a pantoyl-adenylate intermediate.</text>
</comment>
<comment type="catalytic activity">
    <reaction evidence="1">
        <text>(R)-pantoate + beta-alanine + ATP = (R)-pantothenate + AMP + diphosphate + H(+)</text>
        <dbReference type="Rhea" id="RHEA:10912"/>
        <dbReference type="ChEBI" id="CHEBI:15378"/>
        <dbReference type="ChEBI" id="CHEBI:15980"/>
        <dbReference type="ChEBI" id="CHEBI:29032"/>
        <dbReference type="ChEBI" id="CHEBI:30616"/>
        <dbReference type="ChEBI" id="CHEBI:33019"/>
        <dbReference type="ChEBI" id="CHEBI:57966"/>
        <dbReference type="ChEBI" id="CHEBI:456215"/>
        <dbReference type="EC" id="6.3.2.1"/>
    </reaction>
</comment>
<comment type="pathway">
    <text evidence="1">Cofactor biosynthesis; (R)-pantothenate biosynthesis; (R)-pantothenate from (R)-pantoate and beta-alanine: step 1/1.</text>
</comment>
<comment type="subunit">
    <text evidence="1">Homodimer.</text>
</comment>
<comment type="subcellular location">
    <subcellularLocation>
        <location evidence="1">Cytoplasm</location>
    </subcellularLocation>
</comment>
<comment type="miscellaneous">
    <text evidence="1">The reaction proceeds by a bi uni uni bi ping pong mechanism.</text>
</comment>
<comment type="similarity">
    <text evidence="1">Belongs to the pantothenate synthetase family.</text>
</comment>
<dbReference type="EC" id="6.3.2.1" evidence="1"/>
<dbReference type="EMBL" id="CP000356">
    <property type="protein sequence ID" value="ABF54708.1"/>
    <property type="molecule type" value="Genomic_DNA"/>
</dbReference>
<dbReference type="RefSeq" id="WP_011543271.1">
    <property type="nucleotide sequence ID" value="NC_008048.1"/>
</dbReference>
<dbReference type="SMR" id="Q1GNR4"/>
<dbReference type="STRING" id="317655.Sala_3003"/>
<dbReference type="KEGG" id="sal:Sala_3003"/>
<dbReference type="eggNOG" id="COG0414">
    <property type="taxonomic scope" value="Bacteria"/>
</dbReference>
<dbReference type="HOGENOM" id="CLU_047148_0_0_5"/>
<dbReference type="OrthoDB" id="9773087at2"/>
<dbReference type="UniPathway" id="UPA00028">
    <property type="reaction ID" value="UER00005"/>
</dbReference>
<dbReference type="Proteomes" id="UP000006578">
    <property type="component" value="Chromosome"/>
</dbReference>
<dbReference type="GO" id="GO:0005829">
    <property type="term" value="C:cytosol"/>
    <property type="evidence" value="ECO:0007669"/>
    <property type="project" value="TreeGrafter"/>
</dbReference>
<dbReference type="GO" id="GO:0005524">
    <property type="term" value="F:ATP binding"/>
    <property type="evidence" value="ECO:0007669"/>
    <property type="project" value="UniProtKB-KW"/>
</dbReference>
<dbReference type="GO" id="GO:0004592">
    <property type="term" value="F:pantoate-beta-alanine ligase activity"/>
    <property type="evidence" value="ECO:0007669"/>
    <property type="project" value="UniProtKB-UniRule"/>
</dbReference>
<dbReference type="GO" id="GO:0015940">
    <property type="term" value="P:pantothenate biosynthetic process"/>
    <property type="evidence" value="ECO:0007669"/>
    <property type="project" value="UniProtKB-UniRule"/>
</dbReference>
<dbReference type="CDD" id="cd00560">
    <property type="entry name" value="PanC"/>
    <property type="match status" value="1"/>
</dbReference>
<dbReference type="FunFam" id="3.40.50.620:FF:000114">
    <property type="entry name" value="Pantothenate synthetase"/>
    <property type="match status" value="1"/>
</dbReference>
<dbReference type="Gene3D" id="3.40.50.620">
    <property type="entry name" value="HUPs"/>
    <property type="match status" value="1"/>
</dbReference>
<dbReference type="Gene3D" id="3.30.1300.10">
    <property type="entry name" value="Pantoate-beta-alanine ligase, C-terminal domain"/>
    <property type="match status" value="1"/>
</dbReference>
<dbReference type="HAMAP" id="MF_00158">
    <property type="entry name" value="PanC"/>
    <property type="match status" value="1"/>
</dbReference>
<dbReference type="InterPro" id="IPR004821">
    <property type="entry name" value="Cyt_trans-like"/>
</dbReference>
<dbReference type="InterPro" id="IPR003721">
    <property type="entry name" value="Pantoate_ligase"/>
</dbReference>
<dbReference type="InterPro" id="IPR042176">
    <property type="entry name" value="Pantoate_ligase_C"/>
</dbReference>
<dbReference type="InterPro" id="IPR014729">
    <property type="entry name" value="Rossmann-like_a/b/a_fold"/>
</dbReference>
<dbReference type="NCBIfam" id="TIGR00125">
    <property type="entry name" value="cyt_tran_rel"/>
    <property type="match status" value="1"/>
</dbReference>
<dbReference type="NCBIfam" id="TIGR00018">
    <property type="entry name" value="panC"/>
    <property type="match status" value="1"/>
</dbReference>
<dbReference type="PANTHER" id="PTHR21299">
    <property type="entry name" value="CYTIDYLATE KINASE/PANTOATE-BETA-ALANINE LIGASE"/>
    <property type="match status" value="1"/>
</dbReference>
<dbReference type="PANTHER" id="PTHR21299:SF1">
    <property type="entry name" value="PANTOATE--BETA-ALANINE LIGASE"/>
    <property type="match status" value="1"/>
</dbReference>
<dbReference type="Pfam" id="PF02569">
    <property type="entry name" value="Pantoate_ligase"/>
    <property type="match status" value="1"/>
</dbReference>
<dbReference type="SUPFAM" id="SSF52374">
    <property type="entry name" value="Nucleotidylyl transferase"/>
    <property type="match status" value="1"/>
</dbReference>
<name>PANC_SPHAL</name>
<gene>
    <name evidence="1" type="primary">panC</name>
    <name type="ordered locus">Sala_3003</name>
</gene>
<proteinExistence type="inferred from homology"/>
<accession>Q1GNR4</accession>
<protein>
    <recommendedName>
        <fullName evidence="1">Pantothenate synthetase</fullName>
        <shortName evidence="1">PS</shortName>
        <ecNumber evidence="1">6.3.2.1</ecNumber>
    </recommendedName>
    <alternativeName>
        <fullName evidence="1">Pantoate--beta-alanine ligase</fullName>
    </alternativeName>
    <alternativeName>
        <fullName evidence="1">Pantoate-activating enzyme</fullName>
    </alternativeName>
</protein>
<sequence length="279" mass="29471">MQIIRDIAMLHRAVTALKQGGKSIALVPTMGALHAGHLSLVRMAKRVADHVVVSIFVNPTQFGPNEDFAAYPRDEARDAALLVEEGTSLLWAPDVGTMYPGGHSTHVEVAELGADYCGAARPGHFDGVATVVAKLFNQVRPDIAIFGEKDWQQLAIIRRMARDLDFGIDILGAPIAREADGLALSSRNAYLSAEQRTAAAAFPGALKTAAKAIADGADVAETLARAEAAIVGGGFDSVDYVALADADSLERLAVFRAPARLLAAARIGRTRLIDNLPVG</sequence>
<feature type="chain" id="PRO_0000305558" description="Pantothenate synthetase">
    <location>
        <begin position="1"/>
        <end position="279"/>
    </location>
</feature>
<feature type="active site" description="Proton donor" evidence="1">
    <location>
        <position position="37"/>
    </location>
</feature>
<feature type="binding site" evidence="1">
    <location>
        <begin position="30"/>
        <end position="37"/>
    </location>
    <ligand>
        <name>ATP</name>
        <dbReference type="ChEBI" id="CHEBI:30616"/>
    </ligand>
</feature>
<feature type="binding site" evidence="1">
    <location>
        <position position="61"/>
    </location>
    <ligand>
        <name>(R)-pantoate</name>
        <dbReference type="ChEBI" id="CHEBI:15980"/>
    </ligand>
</feature>
<feature type="binding site" evidence="1">
    <location>
        <position position="61"/>
    </location>
    <ligand>
        <name>beta-alanine</name>
        <dbReference type="ChEBI" id="CHEBI:57966"/>
    </ligand>
</feature>
<feature type="binding site" evidence="1">
    <location>
        <begin position="147"/>
        <end position="150"/>
    </location>
    <ligand>
        <name>ATP</name>
        <dbReference type="ChEBI" id="CHEBI:30616"/>
    </ligand>
</feature>
<feature type="binding site" evidence="1">
    <location>
        <position position="153"/>
    </location>
    <ligand>
        <name>(R)-pantoate</name>
        <dbReference type="ChEBI" id="CHEBI:15980"/>
    </ligand>
</feature>
<feature type="binding site" evidence="1">
    <location>
        <position position="176"/>
    </location>
    <ligand>
        <name>ATP</name>
        <dbReference type="ChEBI" id="CHEBI:30616"/>
    </ligand>
</feature>
<feature type="binding site" evidence="1">
    <location>
        <begin position="184"/>
        <end position="187"/>
    </location>
    <ligand>
        <name>ATP</name>
        <dbReference type="ChEBI" id="CHEBI:30616"/>
    </ligand>
</feature>
<organism>
    <name type="scientific">Sphingopyxis alaskensis (strain DSM 13593 / LMG 18877 / RB2256)</name>
    <name type="common">Sphingomonas alaskensis</name>
    <dbReference type="NCBI Taxonomy" id="317655"/>
    <lineage>
        <taxon>Bacteria</taxon>
        <taxon>Pseudomonadati</taxon>
        <taxon>Pseudomonadota</taxon>
        <taxon>Alphaproteobacteria</taxon>
        <taxon>Sphingomonadales</taxon>
        <taxon>Sphingomonadaceae</taxon>
        <taxon>Sphingopyxis</taxon>
    </lineage>
</organism>
<evidence type="ECO:0000255" key="1">
    <source>
        <dbReference type="HAMAP-Rule" id="MF_00158"/>
    </source>
</evidence>
<keyword id="KW-0067">ATP-binding</keyword>
<keyword id="KW-0963">Cytoplasm</keyword>
<keyword id="KW-0436">Ligase</keyword>
<keyword id="KW-0547">Nucleotide-binding</keyword>
<keyword id="KW-0566">Pantothenate biosynthesis</keyword>
<keyword id="KW-1185">Reference proteome</keyword>